<dbReference type="EC" id="6.1.1.9" evidence="1"/>
<dbReference type="EMBL" id="CP000076">
    <property type="protein sequence ID" value="AAY90350.1"/>
    <property type="molecule type" value="Genomic_DNA"/>
</dbReference>
<dbReference type="RefSeq" id="WP_011059413.1">
    <property type="nucleotide sequence ID" value="NC_004129.6"/>
</dbReference>
<dbReference type="SMR" id="Q4KHT9"/>
<dbReference type="STRING" id="220664.PFL_1063"/>
<dbReference type="KEGG" id="pfl:PFL_1063"/>
<dbReference type="PATRIC" id="fig|220664.5.peg.1091"/>
<dbReference type="eggNOG" id="COG0525">
    <property type="taxonomic scope" value="Bacteria"/>
</dbReference>
<dbReference type="HOGENOM" id="CLU_001493_0_2_6"/>
<dbReference type="Proteomes" id="UP000008540">
    <property type="component" value="Chromosome"/>
</dbReference>
<dbReference type="GO" id="GO:0005829">
    <property type="term" value="C:cytosol"/>
    <property type="evidence" value="ECO:0007669"/>
    <property type="project" value="TreeGrafter"/>
</dbReference>
<dbReference type="GO" id="GO:0002161">
    <property type="term" value="F:aminoacyl-tRNA deacylase activity"/>
    <property type="evidence" value="ECO:0007669"/>
    <property type="project" value="InterPro"/>
</dbReference>
<dbReference type="GO" id="GO:0005524">
    <property type="term" value="F:ATP binding"/>
    <property type="evidence" value="ECO:0007669"/>
    <property type="project" value="UniProtKB-UniRule"/>
</dbReference>
<dbReference type="GO" id="GO:0004832">
    <property type="term" value="F:valine-tRNA ligase activity"/>
    <property type="evidence" value="ECO:0007669"/>
    <property type="project" value="UniProtKB-UniRule"/>
</dbReference>
<dbReference type="GO" id="GO:0006438">
    <property type="term" value="P:valyl-tRNA aminoacylation"/>
    <property type="evidence" value="ECO:0007669"/>
    <property type="project" value="UniProtKB-UniRule"/>
</dbReference>
<dbReference type="CDD" id="cd07962">
    <property type="entry name" value="Anticodon_Ia_Val"/>
    <property type="match status" value="1"/>
</dbReference>
<dbReference type="CDD" id="cd00817">
    <property type="entry name" value="ValRS_core"/>
    <property type="match status" value="1"/>
</dbReference>
<dbReference type="FunFam" id="1.10.287.380:FF:000001">
    <property type="entry name" value="Valine--tRNA ligase"/>
    <property type="match status" value="1"/>
</dbReference>
<dbReference type="FunFam" id="1.10.730.10:FF:000007">
    <property type="entry name" value="Valine--tRNA ligase"/>
    <property type="match status" value="1"/>
</dbReference>
<dbReference type="FunFam" id="3.40.50.620:FF:000146">
    <property type="entry name" value="Valine--tRNA ligase"/>
    <property type="match status" value="1"/>
</dbReference>
<dbReference type="FunFam" id="3.90.740.10:FF:000003">
    <property type="entry name" value="Valine--tRNA ligase"/>
    <property type="match status" value="1"/>
</dbReference>
<dbReference type="FunFam" id="3.40.50.620:FF:000020">
    <property type="entry name" value="Valine--tRNA ligase, mitochondrial"/>
    <property type="match status" value="1"/>
</dbReference>
<dbReference type="Gene3D" id="3.40.50.620">
    <property type="entry name" value="HUPs"/>
    <property type="match status" value="2"/>
</dbReference>
<dbReference type="Gene3D" id="1.10.730.10">
    <property type="entry name" value="Isoleucyl-tRNA Synthetase, Domain 1"/>
    <property type="match status" value="1"/>
</dbReference>
<dbReference type="Gene3D" id="1.10.287.380">
    <property type="entry name" value="Valyl-tRNA synthetase, C-terminal domain"/>
    <property type="match status" value="1"/>
</dbReference>
<dbReference type="Gene3D" id="3.90.740.10">
    <property type="entry name" value="Valyl/Leucyl/Isoleucyl-tRNA synthetase, editing domain"/>
    <property type="match status" value="1"/>
</dbReference>
<dbReference type="HAMAP" id="MF_02004">
    <property type="entry name" value="Val_tRNA_synth_type1"/>
    <property type="match status" value="1"/>
</dbReference>
<dbReference type="InterPro" id="IPR001412">
    <property type="entry name" value="aa-tRNA-synth_I_CS"/>
</dbReference>
<dbReference type="InterPro" id="IPR002300">
    <property type="entry name" value="aa-tRNA-synth_Ia"/>
</dbReference>
<dbReference type="InterPro" id="IPR033705">
    <property type="entry name" value="Anticodon_Ia_Val"/>
</dbReference>
<dbReference type="InterPro" id="IPR013155">
    <property type="entry name" value="M/V/L/I-tRNA-synth_anticd-bd"/>
</dbReference>
<dbReference type="InterPro" id="IPR014729">
    <property type="entry name" value="Rossmann-like_a/b/a_fold"/>
</dbReference>
<dbReference type="InterPro" id="IPR010978">
    <property type="entry name" value="tRNA-bd_arm"/>
</dbReference>
<dbReference type="InterPro" id="IPR009080">
    <property type="entry name" value="tRNAsynth_Ia_anticodon-bd"/>
</dbReference>
<dbReference type="InterPro" id="IPR037118">
    <property type="entry name" value="Val-tRNA_synth_C_sf"/>
</dbReference>
<dbReference type="InterPro" id="IPR019499">
    <property type="entry name" value="Val-tRNA_synth_tRNA-bd"/>
</dbReference>
<dbReference type="InterPro" id="IPR009008">
    <property type="entry name" value="Val/Leu/Ile-tRNA-synth_edit"/>
</dbReference>
<dbReference type="InterPro" id="IPR002303">
    <property type="entry name" value="Valyl-tRNA_ligase"/>
</dbReference>
<dbReference type="NCBIfam" id="NF004349">
    <property type="entry name" value="PRK05729.1"/>
    <property type="match status" value="1"/>
</dbReference>
<dbReference type="NCBIfam" id="TIGR00422">
    <property type="entry name" value="valS"/>
    <property type="match status" value="1"/>
</dbReference>
<dbReference type="PANTHER" id="PTHR11946:SF93">
    <property type="entry name" value="VALINE--TRNA LIGASE, CHLOROPLASTIC_MITOCHONDRIAL 2"/>
    <property type="match status" value="1"/>
</dbReference>
<dbReference type="PANTHER" id="PTHR11946">
    <property type="entry name" value="VALYL-TRNA SYNTHETASES"/>
    <property type="match status" value="1"/>
</dbReference>
<dbReference type="Pfam" id="PF08264">
    <property type="entry name" value="Anticodon_1"/>
    <property type="match status" value="1"/>
</dbReference>
<dbReference type="Pfam" id="PF00133">
    <property type="entry name" value="tRNA-synt_1"/>
    <property type="match status" value="1"/>
</dbReference>
<dbReference type="Pfam" id="PF10458">
    <property type="entry name" value="Val_tRNA-synt_C"/>
    <property type="match status" value="1"/>
</dbReference>
<dbReference type="PRINTS" id="PR00986">
    <property type="entry name" value="TRNASYNTHVAL"/>
</dbReference>
<dbReference type="SUPFAM" id="SSF47323">
    <property type="entry name" value="Anticodon-binding domain of a subclass of class I aminoacyl-tRNA synthetases"/>
    <property type="match status" value="1"/>
</dbReference>
<dbReference type="SUPFAM" id="SSF52374">
    <property type="entry name" value="Nucleotidylyl transferase"/>
    <property type="match status" value="1"/>
</dbReference>
<dbReference type="SUPFAM" id="SSF46589">
    <property type="entry name" value="tRNA-binding arm"/>
    <property type="match status" value="1"/>
</dbReference>
<dbReference type="SUPFAM" id="SSF50677">
    <property type="entry name" value="ValRS/IleRS/LeuRS editing domain"/>
    <property type="match status" value="1"/>
</dbReference>
<dbReference type="PROSITE" id="PS00178">
    <property type="entry name" value="AA_TRNA_LIGASE_I"/>
    <property type="match status" value="1"/>
</dbReference>
<comment type="function">
    <text evidence="1">Catalyzes the attachment of valine to tRNA(Val). As ValRS can inadvertently accommodate and process structurally similar amino acids such as threonine, to avoid such errors, it has a 'posttransfer' editing activity that hydrolyzes mischarged Thr-tRNA(Val) in a tRNA-dependent manner.</text>
</comment>
<comment type="catalytic activity">
    <reaction evidence="1">
        <text>tRNA(Val) + L-valine + ATP = L-valyl-tRNA(Val) + AMP + diphosphate</text>
        <dbReference type="Rhea" id="RHEA:10704"/>
        <dbReference type="Rhea" id="RHEA-COMP:9672"/>
        <dbReference type="Rhea" id="RHEA-COMP:9708"/>
        <dbReference type="ChEBI" id="CHEBI:30616"/>
        <dbReference type="ChEBI" id="CHEBI:33019"/>
        <dbReference type="ChEBI" id="CHEBI:57762"/>
        <dbReference type="ChEBI" id="CHEBI:78442"/>
        <dbReference type="ChEBI" id="CHEBI:78537"/>
        <dbReference type="ChEBI" id="CHEBI:456215"/>
        <dbReference type="EC" id="6.1.1.9"/>
    </reaction>
</comment>
<comment type="subunit">
    <text evidence="1">Monomer.</text>
</comment>
<comment type="subcellular location">
    <subcellularLocation>
        <location evidence="1">Cytoplasm</location>
    </subcellularLocation>
</comment>
<comment type="domain">
    <text evidence="1">ValRS has two distinct active sites: one for aminoacylation and one for editing. The misactivated threonine is translocated from the active site to the editing site.</text>
</comment>
<comment type="domain">
    <text evidence="1">The C-terminal coiled-coil domain is crucial for aminoacylation activity.</text>
</comment>
<comment type="similarity">
    <text evidence="1">Belongs to the class-I aminoacyl-tRNA synthetase family. ValS type 1 subfamily.</text>
</comment>
<accession>Q4KHT9</accession>
<keyword id="KW-0030">Aminoacyl-tRNA synthetase</keyword>
<keyword id="KW-0067">ATP-binding</keyword>
<keyword id="KW-0175">Coiled coil</keyword>
<keyword id="KW-0963">Cytoplasm</keyword>
<keyword id="KW-0436">Ligase</keyword>
<keyword id="KW-0547">Nucleotide-binding</keyword>
<keyword id="KW-0648">Protein biosynthesis</keyword>
<proteinExistence type="inferred from homology"/>
<protein>
    <recommendedName>
        <fullName evidence="1">Valine--tRNA ligase</fullName>
        <ecNumber evidence="1">6.1.1.9</ecNumber>
    </recommendedName>
    <alternativeName>
        <fullName evidence="1">Valyl-tRNA synthetase</fullName>
        <shortName evidence="1">ValRS</shortName>
    </alternativeName>
</protein>
<gene>
    <name evidence="1" type="primary">valS</name>
    <name type="ordered locus">PFL_1063</name>
</gene>
<sequence>MDKTYQPHAIETSWYQTWESENYFAPQGAGDSYTIMIPPPNVTGSLHMGHGFNNAIMDALIRFRRMQGRNTLWQPGTDHAGIATQMLVERQIEAQGQNRHDLGREKFLEKVWEWKDQSGGNISRQIRRLGSSVDWSRERFTMDDGLSEAVKEAFVRLHEDGLIYRGKRLVNWDTKLHTAISDLEVENHDEKGFLWNLKYPLADGAKTAEGNDYLIVATTRPETMLGDSAVAVNPEDERYKALIGKFVELPLVGRRIPIIADDYCDPEFGTGCVKITPAHDFNDYEVGKRHNLPLLNIFDKNAAVLPACQVFNLDGSLNDSVDGKIPAEYVGLDRFEARKQIVAAFDAAGLLVSVDDHALKVPKGDRSGTVIEPWLTDQWYVSTKPLAEPAIAAVEDGRIAFVPKQYENMYFSWMRDIQDWCISRQLWWGHRIPAWYDESGKVYVGRDEAEVRAKHNLGPDVALQQDNDVLDTWFSSGLWTFSTLGWPEQTDFLKTFHPTDVLVTGFDIIFFWVARMIMLTMHLVKNEDGTPQVPFKTVYVHGLVRDGQGQKMSKSKGNVLDPLDIIDGIDLETLVQKRTTGLMQPKLQKAIEKQTRAEFADGIASYGTDALRFTFCSLATTGRDIKFDMGRVEGYRNFCNKIWNAARYVLDKGEDCGQNGEAYELSLADRWIISQLQRTEAEVTRQLDQFRFDLAAQALYEFIWNQYCDWYLELSKPVLWDENSPVERQRGTRRTLVRVLEVALRLAHPFMPFITEEIWQRLAPLAGSTGKTIMLQPWPVANETRIDQGAEDDIEWLKGLMLGTRNIRAEMNIGPGKPLALFLKNVSAEDQRRLTENEALLKKLARLESITVLAAGDEAPLSATALVGEMEVLVPMAGLIDKGAELARLDKEIQRLQGEVQRVGGKLSNPSFVDKAPAEVIEKERAKLAEAEQALGKLAEQHARISSL</sequence>
<reference key="1">
    <citation type="journal article" date="2005" name="Nat. Biotechnol.">
        <title>Complete genome sequence of the plant commensal Pseudomonas fluorescens Pf-5.</title>
        <authorList>
            <person name="Paulsen I.T."/>
            <person name="Press C.M."/>
            <person name="Ravel J."/>
            <person name="Kobayashi D.Y."/>
            <person name="Myers G.S.A."/>
            <person name="Mavrodi D.V."/>
            <person name="DeBoy R.T."/>
            <person name="Seshadri R."/>
            <person name="Ren Q."/>
            <person name="Madupu R."/>
            <person name="Dodson R.J."/>
            <person name="Durkin A.S."/>
            <person name="Brinkac L.M."/>
            <person name="Daugherty S.C."/>
            <person name="Sullivan S.A."/>
            <person name="Rosovitz M.J."/>
            <person name="Gwinn M.L."/>
            <person name="Zhou L."/>
            <person name="Schneider D.J."/>
            <person name="Cartinhour S.W."/>
            <person name="Nelson W.C."/>
            <person name="Weidman J."/>
            <person name="Watkins K."/>
            <person name="Tran K."/>
            <person name="Khouri H."/>
            <person name="Pierson E.A."/>
            <person name="Pierson L.S. III"/>
            <person name="Thomashow L.S."/>
            <person name="Loper J.E."/>
        </authorList>
    </citation>
    <scope>NUCLEOTIDE SEQUENCE [LARGE SCALE GENOMIC DNA]</scope>
    <source>
        <strain>ATCC BAA-477 / NRRL B-23932 / Pf-5</strain>
    </source>
</reference>
<evidence type="ECO:0000255" key="1">
    <source>
        <dbReference type="HAMAP-Rule" id="MF_02004"/>
    </source>
</evidence>
<feature type="chain" id="PRO_0000224536" description="Valine--tRNA ligase">
    <location>
        <begin position="1"/>
        <end position="948"/>
    </location>
</feature>
<feature type="coiled-coil region" evidence="1">
    <location>
        <begin position="879"/>
        <end position="947"/>
    </location>
</feature>
<feature type="short sequence motif" description="'HIGH' region">
    <location>
        <begin position="40"/>
        <end position="50"/>
    </location>
</feature>
<feature type="short sequence motif" description="'KMSKS' region">
    <location>
        <begin position="551"/>
        <end position="555"/>
    </location>
</feature>
<feature type="binding site" evidence="1">
    <location>
        <position position="554"/>
    </location>
    <ligand>
        <name>ATP</name>
        <dbReference type="ChEBI" id="CHEBI:30616"/>
    </ligand>
</feature>
<organism>
    <name type="scientific">Pseudomonas fluorescens (strain ATCC BAA-477 / NRRL B-23932 / Pf-5)</name>
    <dbReference type="NCBI Taxonomy" id="220664"/>
    <lineage>
        <taxon>Bacteria</taxon>
        <taxon>Pseudomonadati</taxon>
        <taxon>Pseudomonadota</taxon>
        <taxon>Gammaproteobacteria</taxon>
        <taxon>Pseudomonadales</taxon>
        <taxon>Pseudomonadaceae</taxon>
        <taxon>Pseudomonas</taxon>
    </lineage>
</organism>
<name>SYV_PSEF5</name>